<name>PTU3C_STAAR</name>
<proteinExistence type="inferred from homology"/>
<evidence type="ECO:0000250" key="1"/>
<evidence type="ECO:0000255" key="2">
    <source>
        <dbReference type="PROSITE-ProRule" id="PRU00416"/>
    </source>
</evidence>
<evidence type="ECO:0000255" key="3">
    <source>
        <dbReference type="PROSITE-ProRule" id="PRU00421"/>
    </source>
</evidence>
<evidence type="ECO:0000255" key="4">
    <source>
        <dbReference type="PROSITE-ProRule" id="PRU00426"/>
    </source>
</evidence>
<accession>Q6GDR0</accession>
<organism>
    <name type="scientific">Staphylococcus aureus (strain MRSA252)</name>
    <dbReference type="NCBI Taxonomy" id="282458"/>
    <lineage>
        <taxon>Bacteria</taxon>
        <taxon>Bacillati</taxon>
        <taxon>Bacillota</taxon>
        <taxon>Bacilli</taxon>
        <taxon>Bacillales</taxon>
        <taxon>Staphylococcaceae</taxon>
        <taxon>Staphylococcus</taxon>
    </lineage>
</organism>
<reference key="1">
    <citation type="journal article" date="2004" name="Proc. Natl. Acad. Sci. U.S.A.">
        <title>Complete genomes of two clinical Staphylococcus aureus strains: evidence for the rapid evolution of virulence and drug resistance.</title>
        <authorList>
            <person name="Holden M.T.G."/>
            <person name="Feil E.J."/>
            <person name="Lindsay J.A."/>
            <person name="Peacock S.J."/>
            <person name="Day N.P.J."/>
            <person name="Enright M.C."/>
            <person name="Foster T.J."/>
            <person name="Moore C.E."/>
            <person name="Hurst L."/>
            <person name="Atkin R."/>
            <person name="Barron A."/>
            <person name="Bason N."/>
            <person name="Bentley S.D."/>
            <person name="Chillingworth C."/>
            <person name="Chillingworth T."/>
            <person name="Churcher C."/>
            <person name="Clark L."/>
            <person name="Corton C."/>
            <person name="Cronin A."/>
            <person name="Doggett J."/>
            <person name="Dowd L."/>
            <person name="Feltwell T."/>
            <person name="Hance Z."/>
            <person name="Harris B."/>
            <person name="Hauser H."/>
            <person name="Holroyd S."/>
            <person name="Jagels K."/>
            <person name="James K.D."/>
            <person name="Lennard N."/>
            <person name="Line A."/>
            <person name="Mayes R."/>
            <person name="Moule S."/>
            <person name="Mungall K."/>
            <person name="Ormond D."/>
            <person name="Quail M.A."/>
            <person name="Rabbinowitsch E."/>
            <person name="Rutherford K.M."/>
            <person name="Sanders M."/>
            <person name="Sharp S."/>
            <person name="Simmonds M."/>
            <person name="Stevens K."/>
            <person name="Whitehead S."/>
            <person name="Barrell B.G."/>
            <person name="Spratt B.G."/>
            <person name="Parkhill J."/>
        </authorList>
    </citation>
    <scope>NUCLEOTIDE SEQUENCE [LARGE SCALE GENOMIC DNA]</scope>
    <source>
        <strain>MRSA252</strain>
    </source>
</reference>
<protein>
    <recommendedName>
        <fullName>PTS system glucoside-specific EIICBA component</fullName>
    </recommendedName>
    <domain>
        <recommendedName>
            <fullName>Glucoside permease IIC component</fullName>
        </recommendedName>
        <alternativeName>
            <fullName>PTS system glucoside-specific EIIC component</fullName>
        </alternativeName>
    </domain>
    <domain>
        <recommendedName>
            <fullName>Glucoside-specific phosphotransferase enzyme IIB component</fullName>
            <ecNumber>2.7.1.-</ecNumber>
        </recommendedName>
        <alternativeName>
            <fullName>PTS system glucoside-specific EIIB component</fullName>
        </alternativeName>
    </domain>
    <domain>
        <recommendedName>
            <fullName>Glucoside-specific phosphotransferase enzyme IIA component</fullName>
        </recommendedName>
        <alternativeName>
            <fullName>PTS system glucoside-specific EIIA component</fullName>
        </alternativeName>
    </domain>
</protein>
<feature type="chain" id="PRO_0000351415" description="PTS system glucoside-specific EIICBA component">
    <location>
        <begin position="1"/>
        <end position="688"/>
    </location>
</feature>
<feature type="transmembrane region" description="Helical" evidence="4">
    <location>
        <begin position="12"/>
        <end position="32"/>
    </location>
</feature>
<feature type="transmembrane region" description="Helical" evidence="4">
    <location>
        <begin position="81"/>
        <end position="101"/>
    </location>
</feature>
<feature type="transmembrane region" description="Helical" evidence="4">
    <location>
        <begin position="137"/>
        <end position="157"/>
    </location>
</feature>
<feature type="transmembrane region" description="Helical" evidence="4">
    <location>
        <begin position="182"/>
        <end position="202"/>
    </location>
</feature>
<feature type="transmembrane region" description="Helical" evidence="4">
    <location>
        <begin position="223"/>
        <end position="243"/>
    </location>
</feature>
<feature type="transmembrane region" description="Helical" evidence="4">
    <location>
        <begin position="284"/>
        <end position="304"/>
    </location>
</feature>
<feature type="transmembrane region" description="Helical" evidence="4">
    <location>
        <begin position="315"/>
        <end position="335"/>
    </location>
</feature>
<feature type="transmembrane region" description="Helical" evidence="4">
    <location>
        <begin position="340"/>
        <end position="360"/>
    </location>
</feature>
<feature type="transmembrane region" description="Helical" evidence="4">
    <location>
        <begin position="364"/>
        <end position="384"/>
    </location>
</feature>
<feature type="transmembrane region" description="Helical" evidence="4">
    <location>
        <begin position="395"/>
        <end position="415"/>
    </location>
</feature>
<feature type="domain" description="PTS EIIC type-1" evidence="4">
    <location>
        <begin position="3"/>
        <end position="427"/>
    </location>
</feature>
<feature type="domain" description="PTS EIIB type-1" evidence="3">
    <location>
        <begin position="438"/>
        <end position="519"/>
    </location>
</feature>
<feature type="domain" description="PTS EIIA type-1" evidence="2">
    <location>
        <begin position="560"/>
        <end position="664"/>
    </location>
</feature>
<feature type="active site" description="Phosphocysteine intermediate; for EIIB activity" evidence="3">
    <location>
        <position position="460"/>
    </location>
</feature>
<feature type="active site" description="Tele-phosphohistidine intermediate; for EIIA activity" evidence="2">
    <location>
        <position position="612"/>
    </location>
</feature>
<dbReference type="EC" id="2.7.1.-"/>
<dbReference type="EMBL" id="BX571856">
    <property type="protein sequence ID" value="CAG41597.1"/>
    <property type="molecule type" value="Genomic_DNA"/>
</dbReference>
<dbReference type="SMR" id="Q6GDR0"/>
<dbReference type="KEGG" id="sar:SAR2618"/>
<dbReference type="HOGENOM" id="CLU_012312_1_1_9"/>
<dbReference type="Proteomes" id="UP000000596">
    <property type="component" value="Chromosome"/>
</dbReference>
<dbReference type="GO" id="GO:0005886">
    <property type="term" value="C:plasma membrane"/>
    <property type="evidence" value="ECO:0007669"/>
    <property type="project" value="UniProtKB-SubCell"/>
</dbReference>
<dbReference type="GO" id="GO:0055056">
    <property type="term" value="F:D-glucose transmembrane transporter activity"/>
    <property type="evidence" value="ECO:0007669"/>
    <property type="project" value="InterPro"/>
</dbReference>
<dbReference type="GO" id="GO:0016301">
    <property type="term" value="F:kinase activity"/>
    <property type="evidence" value="ECO:0007669"/>
    <property type="project" value="UniProtKB-KW"/>
</dbReference>
<dbReference type="GO" id="GO:0008982">
    <property type="term" value="F:protein-N(PI)-phosphohistidine-sugar phosphotransferase activity"/>
    <property type="evidence" value="ECO:0007669"/>
    <property type="project" value="InterPro"/>
</dbReference>
<dbReference type="GO" id="GO:0090563">
    <property type="term" value="F:protein-phosphocysteine-sugar phosphotransferase activity"/>
    <property type="evidence" value="ECO:0007669"/>
    <property type="project" value="TreeGrafter"/>
</dbReference>
<dbReference type="GO" id="GO:1904659">
    <property type="term" value="P:D-glucose transmembrane transport"/>
    <property type="evidence" value="ECO:0007669"/>
    <property type="project" value="InterPro"/>
</dbReference>
<dbReference type="GO" id="GO:0009401">
    <property type="term" value="P:phosphoenolpyruvate-dependent sugar phosphotransferase system"/>
    <property type="evidence" value="ECO:0007669"/>
    <property type="project" value="UniProtKB-KW"/>
</dbReference>
<dbReference type="CDD" id="cd00212">
    <property type="entry name" value="PTS_IIB_glc"/>
    <property type="match status" value="1"/>
</dbReference>
<dbReference type="FunFam" id="2.70.70.10:FF:000001">
    <property type="entry name" value="PTS system glucose-specific IIA component"/>
    <property type="match status" value="1"/>
</dbReference>
<dbReference type="FunFam" id="3.30.1360.60:FF:000001">
    <property type="entry name" value="PTS system glucose-specific IIBC component PtsG"/>
    <property type="match status" value="1"/>
</dbReference>
<dbReference type="Gene3D" id="2.70.70.10">
    <property type="entry name" value="Glucose Permease (Domain IIA)"/>
    <property type="match status" value="1"/>
</dbReference>
<dbReference type="Gene3D" id="3.30.1360.60">
    <property type="entry name" value="Glucose permease domain IIB"/>
    <property type="match status" value="1"/>
</dbReference>
<dbReference type="InterPro" id="IPR011055">
    <property type="entry name" value="Dup_hybrid_motif"/>
</dbReference>
<dbReference type="InterPro" id="IPR036878">
    <property type="entry name" value="Glu_permease_IIB"/>
</dbReference>
<dbReference type="InterPro" id="IPR018113">
    <property type="entry name" value="PTrfase_EIIB_Cys"/>
</dbReference>
<dbReference type="InterPro" id="IPR001127">
    <property type="entry name" value="PTS_EIIA_1_perm"/>
</dbReference>
<dbReference type="InterPro" id="IPR003352">
    <property type="entry name" value="PTS_EIIC"/>
</dbReference>
<dbReference type="InterPro" id="IPR013013">
    <property type="entry name" value="PTS_EIIC_1"/>
</dbReference>
<dbReference type="InterPro" id="IPR050429">
    <property type="entry name" value="PTS_Glucose_EIICBA"/>
</dbReference>
<dbReference type="InterPro" id="IPR001996">
    <property type="entry name" value="PTS_IIB_1"/>
</dbReference>
<dbReference type="InterPro" id="IPR011299">
    <property type="entry name" value="PTS_IIBC_glc"/>
</dbReference>
<dbReference type="NCBIfam" id="TIGR00826">
    <property type="entry name" value="EIIB_glc"/>
    <property type="match status" value="1"/>
</dbReference>
<dbReference type="NCBIfam" id="TIGR00830">
    <property type="entry name" value="PTBA"/>
    <property type="match status" value="1"/>
</dbReference>
<dbReference type="NCBIfam" id="TIGR02002">
    <property type="entry name" value="PTS-II-BC-glcB"/>
    <property type="match status" value="1"/>
</dbReference>
<dbReference type="PANTHER" id="PTHR30009">
    <property type="entry name" value="CYTOCHROME C-TYPE SYNTHESIS PROTEIN AND PTS TRANSMEMBRANE COMPONENT"/>
    <property type="match status" value="1"/>
</dbReference>
<dbReference type="PANTHER" id="PTHR30009:SF20">
    <property type="entry name" value="PTS SYSTEM GLUCOSE-SPECIFIC EIICB COMPONENT-RELATED"/>
    <property type="match status" value="1"/>
</dbReference>
<dbReference type="Pfam" id="PF00358">
    <property type="entry name" value="PTS_EIIA_1"/>
    <property type="match status" value="1"/>
</dbReference>
<dbReference type="Pfam" id="PF00367">
    <property type="entry name" value="PTS_EIIB"/>
    <property type="match status" value="1"/>
</dbReference>
<dbReference type="Pfam" id="PF02378">
    <property type="entry name" value="PTS_EIIC"/>
    <property type="match status" value="1"/>
</dbReference>
<dbReference type="SUPFAM" id="SSF51261">
    <property type="entry name" value="Duplicated hybrid motif"/>
    <property type="match status" value="1"/>
</dbReference>
<dbReference type="SUPFAM" id="SSF55604">
    <property type="entry name" value="Glucose permease domain IIB"/>
    <property type="match status" value="1"/>
</dbReference>
<dbReference type="PROSITE" id="PS51093">
    <property type="entry name" value="PTS_EIIA_TYPE_1"/>
    <property type="match status" value="1"/>
</dbReference>
<dbReference type="PROSITE" id="PS00371">
    <property type="entry name" value="PTS_EIIA_TYPE_1_HIS"/>
    <property type="match status" value="1"/>
</dbReference>
<dbReference type="PROSITE" id="PS51098">
    <property type="entry name" value="PTS_EIIB_TYPE_1"/>
    <property type="match status" value="1"/>
</dbReference>
<dbReference type="PROSITE" id="PS01035">
    <property type="entry name" value="PTS_EIIB_TYPE_1_CYS"/>
    <property type="match status" value="1"/>
</dbReference>
<dbReference type="PROSITE" id="PS51103">
    <property type="entry name" value="PTS_EIIC_TYPE_1"/>
    <property type="match status" value="1"/>
</dbReference>
<gene>
    <name type="primary">glcB</name>
    <name type="ordered locus">SAR2618</name>
</gene>
<sequence>MFKKLFGQLQRIGKALMLPVAILPAAGILLAFGNAMHNEQLVEIAPWLKNDIIVMISSVMEAAGQVVFDNLPLLFAVGTALGLAGGDGVAALAALVGYLIMNATMGKVLHITIDDIFSYAKGAKELSQAAKEPAHALVLGIPTLQTGVFGGIIMGALAAWCYNKFYNITLPPFLGFFAGKRFVPIVTSVVAIATGVVLSFAWPPIQDGLNSLSNFLLNKNLTLTTFIFGIIERSLIPFGLHHIFYSPFWFEFGSYTNHAGELVRGDQRIWMAQLKDGVPFTAGAFTTGKYPFMMFGLPAAAFAIYKNARPERKKIVGGLMLSAGLTAFLTGITEPLEFSFLFVAPVLYGIHVLLAGTSFLVMHLLGVKIGMTFSGGFIDYILYGLLNWDRSHALLVIPVGIVYAIVYYFLFDFAIRKFKLKTPGREDEETEIRNSSVAKLPFDVLDAMGGKENIKHLDACITRLRVEVVDKSKVDVAGIKALGASGVLEVGNNMQAIFGPKSDQIKHDMAKIMSGEITKPSETTVTEEMSDEPVHVEALGTTDIYAPGVGQIIPLSEVPDQVFAGKMMGDGVGFIPEKGEIVAPFDGTVKTIFPTKHAIGLESESGVEVLIHIGIDTVKLNGEGFESLINVDEKVTQGQPLMKVNLAYLKAHAPSIVTPMIITNLENKELVIEDVQDADPGKLIMTVK</sequence>
<comment type="function">
    <text evidence="1">The phosphoenolpyruvate-dependent sugar phosphotransferase system (sugar PTS), a major carbohydrate active -transport system, catalyzes the phosphorylation of incoming sugar substrates concomitantly with their translocation across the cell membrane. This system is involved in alpha- and beta-glucoside transport (By similarity).</text>
</comment>
<comment type="subcellular location">
    <subcellularLocation>
        <location evidence="4">Cell membrane</location>
        <topology evidence="4">Multi-pass membrane protein</topology>
    </subcellularLocation>
</comment>
<comment type="domain">
    <text>The EIIC domain forms the PTS system translocation channel and contains the specific substrate-binding site.</text>
</comment>
<comment type="domain">
    <text>The EIIB domain is phosphorylated by phospho-EIIA on a cysteinyl or histidyl residue, depending on the transported sugar. Then, it transfers the phosphoryl group to the sugar substrate concomitantly with the sugar uptake processed by the EIIC domain.</text>
</comment>
<comment type="domain">
    <text>The EIIA domain is phosphorylated by phospho-HPr on a histidyl residue. Then, it transfers the phosphoryl group to the EIIB domain.</text>
</comment>
<keyword id="KW-1003">Cell membrane</keyword>
<keyword id="KW-0418">Kinase</keyword>
<keyword id="KW-0472">Membrane</keyword>
<keyword id="KW-0598">Phosphotransferase system</keyword>
<keyword id="KW-0762">Sugar transport</keyword>
<keyword id="KW-0808">Transferase</keyword>
<keyword id="KW-0812">Transmembrane</keyword>
<keyword id="KW-1133">Transmembrane helix</keyword>
<keyword id="KW-0813">Transport</keyword>